<sequence>MQPAMLLGLLGAAALAAVSSAPVDNRDHNEEMVTRCIIEVLSNALSKSSVPTITPECRQVLKKSGKEVKGEEKGENQNSKFEVRLLRDPADASGTRWASSREDAGAPVEDSQGQTKVGNEKWTEGGGHSREGVDDQESLRPSNQQASKEAKIYHSEERVGKEREKEEGKIYPMGEHREDAGEEKKHIEDSGEKPNTFSNKRSEASAKKKDESVARADAHSMELEEKTHSREQSSQESGEETRRQEKPQELTDQDQSQEESQEGEEGEEGEEGEEGEEDSASEVTKRRPRHHHGRSGSNKSSYEGHPLSEERRPSPKESKEADVATVRLGEKRSHHLAHYRASEEEPEYGEESRSYRGLQYRGRGSEEDRAPRPRSEESQEREYKRNHPDSELESTANRHGEETEEERSYEGANGRQHRGRGREPGAHSALDTREEKRLLDEGHYPVRESPIDTAKRYPQSKWQEQEKNYLNYGEEGDQGRWWQQEEQLGPEESREEVRFPDRQYEPYPITEKRKRLGALFNPYFDPLQWKNSDFEKRGNPDDSFLEDEGEDRNGVTLTEKNSFPEYNYDWWERRPFSEDVNWGYEKRSFARAPQLDLKRQYDGVAELDQLLHYRKKADEFPDFYDSEEQMGPHQEANDEKARADQRVLTAEEKKELENLAAMDLELQKIAEKFSQRG</sequence>
<gene>
    <name type="primary">Chgb</name>
    <name type="synonym">Scg-1</name>
    <name type="synonym">Scg1</name>
</gene>
<name>SCG1_MOUSE</name>
<reference key="1">
    <citation type="journal article" date="1990" name="Nucleic Acids Res.">
        <title>Primary structure of mouse chromogranin B deduced from cDNA sequence.</title>
        <authorList>
            <person name="Linard C.G."/>
            <person name="Mbikay M."/>
            <person name="Seidah N.G."/>
            <person name="Chretien M."/>
        </authorList>
    </citation>
    <scope>NUCLEOTIDE SEQUENCE [MRNA]</scope>
    <source>
        <tissue>Pituitary</tissue>
    </source>
</reference>
<reference key="2">
    <citation type="journal article" date="1990" name="FEBS Lett.">
        <title>The organisation of the mouse chromogranin B (secretogranin I) gene.</title>
        <authorList>
            <person name="Pohl T.M."/>
            <person name="Phillips E."/>
            <person name="Song K."/>
            <person name="Gerdes H.-H."/>
            <person name="Huttner W.B."/>
            <person name="Ruether U."/>
        </authorList>
    </citation>
    <scope>NUCLEOTIDE SEQUENCE [MRNA]</scope>
</reference>
<reference key="3">
    <citation type="journal article" date="2004" name="Genome Res.">
        <title>The status, quality, and expansion of the NIH full-length cDNA project: the Mammalian Gene Collection (MGC).</title>
        <authorList>
            <consortium name="The MGC Project Team"/>
        </authorList>
    </citation>
    <scope>NUCLEOTIDE SEQUENCE [LARGE SCALE MRNA]</scope>
    <source>
        <tissue>Eye</tissue>
    </source>
</reference>
<reference key="4">
    <citation type="journal article" date="1998" name="J. Neurochem.">
        <title>Proteolytic processing of chromogranin B and secretogranin II by prohormone convertases.</title>
        <authorList>
            <person name="Laslop A."/>
            <person name="Weiss C."/>
            <person name="Savaria D."/>
            <person name="Eiter C."/>
            <person name="Tooze S.A."/>
            <person name="Seidah N.G."/>
            <person name="Winkler H."/>
        </authorList>
    </citation>
    <scope>CHARACTERIZATION OF PE-11</scope>
</reference>
<reference key="5">
    <citation type="journal article" date="2010" name="Cell">
        <title>A tissue-specific atlas of mouse protein phosphorylation and expression.</title>
        <authorList>
            <person name="Huttlin E.L."/>
            <person name="Jedrychowski M.P."/>
            <person name="Elias J.E."/>
            <person name="Goswami T."/>
            <person name="Rad R."/>
            <person name="Beausoleil S.A."/>
            <person name="Villen J."/>
            <person name="Haas W."/>
            <person name="Sowa M.E."/>
            <person name="Gygi S.P."/>
        </authorList>
    </citation>
    <scope>PHOSPHORYLATION [LARGE SCALE ANALYSIS] AT SER-220; SER-342; SER-493 AND SER-626</scope>
    <scope>IDENTIFICATION BY MASS SPECTROMETRY [LARGE SCALE ANALYSIS]</scope>
    <source>
        <tissue>Brain</tissue>
        <tissue>Brown adipose tissue</tissue>
        <tissue>Heart</tissue>
        <tissue>Kidney</tissue>
        <tissue>Pancreas</tissue>
    </source>
</reference>
<feature type="signal peptide">
    <location>
        <begin position="1"/>
        <end position="20"/>
    </location>
</feature>
<feature type="chain" id="PRO_0000005441" description="Secretogranin-1">
    <location>
        <begin position="21"/>
        <end position="677"/>
    </location>
</feature>
<feature type="peptide" id="PRO_0000432731" description="PE-11" evidence="8">
    <location>
        <begin position="575"/>
        <end position="585"/>
    </location>
</feature>
<feature type="peptide" id="PRO_0000411988" description="CCB peptide" evidence="1">
    <location>
        <begin position="617"/>
        <end position="677"/>
    </location>
</feature>
<feature type="region of interest" description="Disordered" evidence="6">
    <location>
        <begin position="63"/>
        <end position="505"/>
    </location>
</feature>
<feature type="region of interest" description="Disordered" evidence="6">
    <location>
        <begin position="531"/>
        <end position="558"/>
    </location>
</feature>
<feature type="region of interest" description="Disordered" evidence="6">
    <location>
        <begin position="622"/>
        <end position="646"/>
    </location>
</feature>
<feature type="compositionally biased region" description="Basic and acidic residues" evidence="6">
    <location>
        <begin position="64"/>
        <end position="90"/>
    </location>
</feature>
<feature type="compositionally biased region" description="Basic and acidic residues" evidence="6">
    <location>
        <begin position="118"/>
        <end position="133"/>
    </location>
</feature>
<feature type="compositionally biased region" description="Basic and acidic residues" evidence="6">
    <location>
        <begin position="148"/>
        <end position="192"/>
    </location>
</feature>
<feature type="compositionally biased region" description="Basic and acidic residues" evidence="6">
    <location>
        <begin position="200"/>
        <end position="249"/>
    </location>
</feature>
<feature type="compositionally biased region" description="Acidic residues" evidence="6">
    <location>
        <begin position="251"/>
        <end position="280"/>
    </location>
</feature>
<feature type="compositionally biased region" description="Basic and acidic residues" evidence="6">
    <location>
        <begin position="306"/>
        <end position="322"/>
    </location>
</feature>
<feature type="compositionally biased region" description="Basic and acidic residues" evidence="6">
    <location>
        <begin position="363"/>
        <end position="409"/>
    </location>
</feature>
<feature type="compositionally biased region" description="Basic and acidic residues" evidence="6">
    <location>
        <begin position="421"/>
        <end position="455"/>
    </location>
</feature>
<feature type="compositionally biased region" description="Basic and acidic residues" evidence="6">
    <location>
        <begin position="491"/>
        <end position="504"/>
    </location>
</feature>
<feature type="compositionally biased region" description="Basic and acidic residues" evidence="6">
    <location>
        <begin position="635"/>
        <end position="646"/>
    </location>
</feature>
<feature type="modified residue" description="Phosphoserine" evidence="2">
    <location>
        <position position="93"/>
    </location>
</feature>
<feature type="modified residue" description="Phosphoserine" evidence="5">
    <location>
        <position position="99"/>
    </location>
</feature>
<feature type="modified residue" description="Phosphoserine" evidence="5">
    <location>
        <position position="100"/>
    </location>
</feature>
<feature type="modified residue" description="Phosphoserine" evidence="3">
    <location>
        <position position="129"/>
    </location>
</feature>
<feature type="modified residue" description="Phosphoserine" evidence="3">
    <location>
        <position position="147"/>
    </location>
</feature>
<feature type="modified residue" description="Phosphoserine" evidence="2">
    <location>
        <position position="190"/>
    </location>
</feature>
<feature type="modified residue" description="Phosphoserine" evidence="9">
    <location>
        <position position="220"/>
    </location>
</feature>
<feature type="modified residue" description="Phosphoserine" evidence="3">
    <location>
        <position position="256"/>
    </location>
</feature>
<feature type="modified residue" description="Phosphoserine" evidence="3">
    <location>
        <position position="260"/>
    </location>
</feature>
<feature type="modified residue" description="Phosphoserine" evidence="5">
    <location>
        <position position="300"/>
    </location>
</feature>
<feature type="modified residue" description="Phosphoserine" evidence="5">
    <location>
        <position position="301"/>
    </location>
</feature>
<feature type="modified residue" description="Phosphoserine" evidence="3">
    <location>
        <position position="318"/>
    </location>
</feature>
<feature type="modified residue" description="Phosphoserine" evidence="9">
    <location>
        <position position="342"/>
    </location>
</feature>
<feature type="modified residue" description="Sulfotyrosine" evidence="2">
    <location>
        <position position="348"/>
    </location>
</feature>
<feature type="modified residue" description="Phosphoserine" evidence="3">
    <location>
        <position position="365"/>
    </location>
</feature>
<feature type="modified residue" description="Phosphoserine" evidence="3">
    <location>
        <position position="375"/>
    </location>
</feature>
<feature type="modified residue" description="Phosphoserine" evidence="3">
    <location>
        <position position="378"/>
    </location>
</feature>
<feature type="modified residue" description="Sulfotyrosine" evidence="4">
    <location>
        <position position="472"/>
    </location>
</feature>
<feature type="modified residue" description="Phosphoserine" evidence="9">
    <location>
        <position position="493"/>
    </location>
</feature>
<feature type="modified residue" description="Phosphoserine" evidence="5">
    <location>
        <position position="532"/>
    </location>
</feature>
<feature type="modified residue" description="Phosphoserine" evidence="5">
    <location>
        <position position="543"/>
    </location>
</feature>
<feature type="modified residue" description="Sulfotyrosine" evidence="4">
    <location>
        <position position="566"/>
    </location>
</feature>
<feature type="modified residue" description="Sulfotyrosine" evidence="2">
    <location>
        <position position="624"/>
    </location>
</feature>
<feature type="modified residue" description="Phosphoserine" evidence="9">
    <location>
        <position position="626"/>
    </location>
</feature>
<feature type="glycosylation site" description="O-linked (Xyl...) (chondroitin sulfate) serine" evidence="3">
    <location>
        <position position="93"/>
    </location>
</feature>
<feature type="glycosylation site" description="O-linked (GalNAc...) threonine" evidence="7">
    <location>
        <position position="115"/>
    </location>
</feature>
<feature type="glycosylation site" description="O-linked (Xyl...) (chondroitin sulfate) serine" evidence="3">
    <location>
        <position position="237"/>
    </location>
</feature>
<feature type="disulfide bond" evidence="1">
    <location>
        <begin position="36"/>
        <end position="57"/>
    </location>
</feature>
<feature type="sequence conflict" description="In Ref. 1; CAA35792." evidence="7" ref="1">
    <original>REP</original>
    <variation>LGA</variation>
    <location>
        <begin position="422"/>
        <end position="424"/>
    </location>
</feature>
<protein>
    <recommendedName>
        <fullName>Secretogranin-1</fullName>
    </recommendedName>
    <alternativeName>
        <fullName>Chromogranin-B</fullName>
        <shortName>CgB</shortName>
    </alternativeName>
    <alternativeName>
        <fullName>Secretogranin I</fullName>
        <shortName>SgI</shortName>
    </alternativeName>
    <component>
        <recommendedName>
            <fullName>CCB peptide</fullName>
        </recommendedName>
    </component>
    <component>
        <recommendedName>
            <fullName>PE-11</fullName>
        </recommendedName>
    </component>
</protein>
<keyword id="KW-0165">Cleavage on pair of basic residues</keyword>
<keyword id="KW-1015">Disulfide bond</keyword>
<keyword id="KW-0325">Glycoprotein</keyword>
<keyword id="KW-0597">Phosphoprotein</keyword>
<keyword id="KW-0654">Proteoglycan</keyword>
<keyword id="KW-1185">Reference proteome</keyword>
<keyword id="KW-0964">Secreted</keyword>
<keyword id="KW-0732">Signal</keyword>
<keyword id="KW-0765">Sulfation</keyword>
<proteinExistence type="evidence at protein level"/>
<organism>
    <name type="scientific">Mus musculus</name>
    <name type="common">Mouse</name>
    <dbReference type="NCBI Taxonomy" id="10090"/>
    <lineage>
        <taxon>Eukaryota</taxon>
        <taxon>Metazoa</taxon>
        <taxon>Chordata</taxon>
        <taxon>Craniata</taxon>
        <taxon>Vertebrata</taxon>
        <taxon>Euteleostomi</taxon>
        <taxon>Mammalia</taxon>
        <taxon>Eutheria</taxon>
        <taxon>Euarchontoglires</taxon>
        <taxon>Glires</taxon>
        <taxon>Rodentia</taxon>
        <taxon>Myomorpha</taxon>
        <taxon>Muroidea</taxon>
        <taxon>Muridae</taxon>
        <taxon>Murinae</taxon>
        <taxon>Mus</taxon>
        <taxon>Mus</taxon>
    </lineage>
</organism>
<comment type="function">
    <text>Secretogranin-1 is a neuroendocrine secretory granule protein, which may be the precursor for other biologically active peptides.</text>
</comment>
<comment type="subunit">
    <text evidence="4">Interacts with ITPR1 in the secretory granules.</text>
</comment>
<comment type="interaction">
    <interactant intactId="EBI-990820">
        <id>P16014</id>
    </interactant>
    <interactant intactId="EBI-990792">
        <id>P00441</id>
        <label>SOD1</label>
    </interactant>
    <organismsDiffer>true</organismsDiffer>
    <experiments>6</experiments>
</comment>
<comment type="subcellular location">
    <subcellularLocation>
        <location>Secreted</location>
    </subcellularLocation>
    <text>Neuroendocrine and endocrine secretory granules.</text>
</comment>
<comment type="similarity">
    <text evidence="7">Belongs to the chromogranin/secretogranin protein family.</text>
</comment>
<dbReference type="EMBL" id="X53028">
    <property type="protein sequence ID" value="CAA37199.1"/>
    <property type="molecule type" value="mRNA"/>
</dbReference>
<dbReference type="EMBL" id="X51429">
    <property type="protein sequence ID" value="CAA35792.1"/>
    <property type="molecule type" value="mRNA"/>
</dbReference>
<dbReference type="EMBL" id="BC014736">
    <property type="protein sequence ID" value="AAH14736.1"/>
    <property type="molecule type" value="mRNA"/>
</dbReference>
<dbReference type="CCDS" id="CCDS16777.1"/>
<dbReference type="PIR" id="S09078">
    <property type="entry name" value="S09078"/>
</dbReference>
<dbReference type="RefSeq" id="NP_031720.1">
    <property type="nucleotide sequence ID" value="NM_007694.5"/>
</dbReference>
<dbReference type="BioGRID" id="198697">
    <property type="interactions" value="7"/>
</dbReference>
<dbReference type="FunCoup" id="P16014">
    <property type="interactions" value="123"/>
</dbReference>
<dbReference type="IntAct" id="P16014">
    <property type="interactions" value="3"/>
</dbReference>
<dbReference type="MINT" id="P16014"/>
<dbReference type="STRING" id="10090.ENSMUSP00000028826"/>
<dbReference type="GlyCosmos" id="P16014">
    <property type="glycosylation" value="1 site, No reported glycans"/>
</dbReference>
<dbReference type="GlyGen" id="P16014">
    <property type="glycosylation" value="3 sites"/>
</dbReference>
<dbReference type="iPTMnet" id="P16014"/>
<dbReference type="PhosphoSitePlus" id="P16014"/>
<dbReference type="SwissPalm" id="P16014"/>
<dbReference type="CPTAC" id="non-CPTAC-3496"/>
<dbReference type="jPOST" id="P16014"/>
<dbReference type="PaxDb" id="10090-ENSMUSP00000028826"/>
<dbReference type="PeptideAtlas" id="P16014"/>
<dbReference type="ProteomicsDB" id="255357"/>
<dbReference type="Antibodypedia" id="2170">
    <property type="antibodies" value="276 antibodies from 33 providers"/>
</dbReference>
<dbReference type="DNASU" id="12653"/>
<dbReference type="Ensembl" id="ENSMUST00000028826.4">
    <property type="protein sequence ID" value="ENSMUSP00000028826.4"/>
    <property type="gene ID" value="ENSMUSG00000027350.9"/>
</dbReference>
<dbReference type="GeneID" id="12653"/>
<dbReference type="KEGG" id="mmu:12653"/>
<dbReference type="UCSC" id="uc008mnf.1">
    <property type="organism name" value="mouse"/>
</dbReference>
<dbReference type="AGR" id="MGI:88395"/>
<dbReference type="CTD" id="1114"/>
<dbReference type="MGI" id="MGI:88395">
    <property type="gene designation" value="Chgb"/>
</dbReference>
<dbReference type="VEuPathDB" id="HostDB:ENSMUSG00000027350"/>
<dbReference type="eggNOG" id="ENOG502QRBF">
    <property type="taxonomic scope" value="Eukaryota"/>
</dbReference>
<dbReference type="GeneTree" id="ENSGT00940000154206"/>
<dbReference type="HOGENOM" id="CLU_026095_0_0_1"/>
<dbReference type="InParanoid" id="P16014"/>
<dbReference type="OMA" id="RPGHKHQ"/>
<dbReference type="OrthoDB" id="9907623at2759"/>
<dbReference type="PhylomeDB" id="P16014"/>
<dbReference type="TreeFam" id="TF336596"/>
<dbReference type="Reactome" id="R-MMU-381426">
    <property type="pathway name" value="Regulation of Insulin-like Growth Factor (IGF) transport and uptake by Insulin-like Growth Factor Binding Proteins (IGFBPs)"/>
</dbReference>
<dbReference type="Reactome" id="R-MMU-8957275">
    <property type="pathway name" value="Post-translational protein phosphorylation"/>
</dbReference>
<dbReference type="BioGRID-ORCS" id="12653">
    <property type="hits" value="5 hits in 76 CRISPR screens"/>
</dbReference>
<dbReference type="ChiTaRS" id="Chgb">
    <property type="organism name" value="mouse"/>
</dbReference>
<dbReference type="PRO" id="PR:P16014"/>
<dbReference type="Proteomes" id="UP000000589">
    <property type="component" value="Chromosome 2"/>
</dbReference>
<dbReference type="RNAct" id="P16014">
    <property type="molecule type" value="protein"/>
</dbReference>
<dbReference type="Bgee" id="ENSMUSG00000027350">
    <property type="expression patterns" value="Expressed in superior cervical ganglion and 165 other cell types or tissues"/>
</dbReference>
<dbReference type="ExpressionAtlas" id="P16014">
    <property type="expression patterns" value="baseline and differential"/>
</dbReference>
<dbReference type="GO" id="GO:0005576">
    <property type="term" value="C:extracellular region"/>
    <property type="evidence" value="ECO:0007669"/>
    <property type="project" value="UniProtKB-SubCell"/>
</dbReference>
<dbReference type="GO" id="GO:0030141">
    <property type="term" value="C:secretory granule"/>
    <property type="evidence" value="ECO:0000250"/>
    <property type="project" value="UniProtKB"/>
</dbReference>
<dbReference type="InterPro" id="IPR001819">
    <property type="entry name" value="Chromogranin_AB"/>
</dbReference>
<dbReference type="InterPro" id="IPR018054">
    <property type="entry name" value="Chromogranin_CS"/>
</dbReference>
<dbReference type="InterPro" id="IPR001990">
    <property type="entry name" value="Granin"/>
</dbReference>
<dbReference type="PANTHER" id="PTHR10583">
    <property type="entry name" value="CHROMOGRANIN"/>
    <property type="match status" value="1"/>
</dbReference>
<dbReference type="PANTHER" id="PTHR10583:SF4">
    <property type="entry name" value="SECRETOGRANIN-1"/>
    <property type="match status" value="1"/>
</dbReference>
<dbReference type="Pfam" id="PF01271">
    <property type="entry name" value="Granin"/>
    <property type="match status" value="1"/>
</dbReference>
<dbReference type="PRINTS" id="PR00659">
    <property type="entry name" value="CHROMOGRANIN"/>
</dbReference>
<dbReference type="PROSITE" id="PS00422">
    <property type="entry name" value="GRANINS_1"/>
    <property type="match status" value="1"/>
</dbReference>
<dbReference type="PROSITE" id="PS00423">
    <property type="entry name" value="GRANINS_2"/>
    <property type="match status" value="1"/>
</dbReference>
<accession>P16014</accession>
<evidence type="ECO:0000250" key="1"/>
<evidence type="ECO:0000250" key="2">
    <source>
        <dbReference type="UniProtKB" id="O35314"/>
    </source>
</evidence>
<evidence type="ECO:0000250" key="3">
    <source>
        <dbReference type="UniProtKB" id="P05060"/>
    </source>
</evidence>
<evidence type="ECO:0000250" key="4">
    <source>
        <dbReference type="UniProtKB" id="P23389"/>
    </source>
</evidence>
<evidence type="ECO:0000255" key="5"/>
<evidence type="ECO:0000256" key="6">
    <source>
        <dbReference type="SAM" id="MobiDB-lite"/>
    </source>
</evidence>
<evidence type="ECO:0000305" key="7"/>
<evidence type="ECO:0000305" key="8">
    <source>
    </source>
</evidence>
<evidence type="ECO:0007744" key="9">
    <source>
    </source>
</evidence>